<reference key="1">
    <citation type="journal article" date="2004" name="Science">
        <title>The complete genome sequence of Propionibacterium acnes, a commensal of human skin.</title>
        <authorList>
            <person name="Brueggemann H."/>
            <person name="Henne A."/>
            <person name="Hoster F."/>
            <person name="Liesegang H."/>
            <person name="Wiezer A."/>
            <person name="Strittmatter A."/>
            <person name="Hujer S."/>
            <person name="Duerre P."/>
            <person name="Gottschalk G."/>
        </authorList>
    </citation>
    <scope>NUCLEOTIDE SEQUENCE [LARGE SCALE GENOMIC DNA]</scope>
    <source>
        <strain>DSM 16379 / KPA171202</strain>
    </source>
</reference>
<proteinExistence type="inferred from homology"/>
<protein>
    <recommendedName>
        <fullName evidence="1">Probable potassium transport system protein Kup</fullName>
    </recommendedName>
</protein>
<keyword id="KW-1003">Cell membrane</keyword>
<keyword id="KW-0406">Ion transport</keyword>
<keyword id="KW-0472">Membrane</keyword>
<keyword id="KW-0630">Potassium</keyword>
<keyword id="KW-0633">Potassium transport</keyword>
<keyword id="KW-0769">Symport</keyword>
<keyword id="KW-0812">Transmembrane</keyword>
<keyword id="KW-1133">Transmembrane helix</keyword>
<keyword id="KW-0813">Transport</keyword>
<name>KUP_CUTAK</name>
<sequence>MIRSHERQAVAKATQPIVDREPIRSMKPGLALAALGIVFGDIGTSVLYSLQTVFSMENHAVRPTHGDVMGIISMIFWSILLVVCVKYVIFVMRADNDGEGGILALMALVRRLMASHKGTGMTALLLGIVGAGLFYGDSFITPAISVMSAVEGLTVANPDAEKIVLPASVVILTLLFIVQRRGTEVIGKAFGPVMATWFLTLAALGIPWIIHHPVIITALSPHWAILFSIERPAMAFIAMGAVVLTITGAEALYADMGHVGAPSIRLAWFGLVLPCLLINYLGQGAMILSHPDWIDNPFFRMAPDWATIPLVTIATMATVIASQAVISGAFSMSSEAARLGLLPRLGVRHTSKSEGGQIYIPEVNWTLFIGVLALILIFQTSSKLATAYGLAVTGTFLLTTSLFLVLAHRAWHWPMWALIFFGVIVGGVELSIFSANLLKIASGGWIPLLFATIVVIIMTTWRRGTAYIAKQRQDDEGPLDDFLNWMHETKPTRVPGLAVYPHPGRATTPLALLNNLRFNHVLHEHNIIISIVVENVPHVRHVNRIEKVDLGRPTDGITYIACHVGFTDSQDVPKALALAAAKCPWLKDHLDEAIYYLSLVDVKRDEPQQGAHMAGWRKMLYITMSRNQADRTRVFRIPRTRAVVMGEAVAL</sequence>
<comment type="function">
    <text evidence="1">Transport of potassium into the cell. Likely operates as a K(+):H(+) symporter.</text>
</comment>
<comment type="catalytic activity">
    <reaction evidence="1">
        <text>K(+)(in) + H(+)(in) = K(+)(out) + H(+)(out)</text>
        <dbReference type="Rhea" id="RHEA:28490"/>
        <dbReference type="ChEBI" id="CHEBI:15378"/>
        <dbReference type="ChEBI" id="CHEBI:29103"/>
    </reaction>
    <physiologicalReaction direction="right-to-left" evidence="1">
        <dbReference type="Rhea" id="RHEA:28492"/>
    </physiologicalReaction>
</comment>
<comment type="subcellular location">
    <subcellularLocation>
        <location evidence="1">Cell membrane</location>
        <topology evidence="1">Multi-pass membrane protein</topology>
    </subcellularLocation>
</comment>
<comment type="similarity">
    <text evidence="1">Belongs to the HAK/KUP transporter (TC 2.A.72) family.</text>
</comment>
<dbReference type="EMBL" id="AE017283">
    <property type="protein sequence ID" value="AAT83893.1"/>
    <property type="molecule type" value="Genomic_DNA"/>
</dbReference>
<dbReference type="EnsemblBacteria" id="AAT83893">
    <property type="protein sequence ID" value="AAT83893"/>
    <property type="gene ID" value="PPA2187"/>
</dbReference>
<dbReference type="KEGG" id="pac:PPA2187"/>
<dbReference type="eggNOG" id="COG3158">
    <property type="taxonomic scope" value="Bacteria"/>
</dbReference>
<dbReference type="HOGENOM" id="CLU_008142_4_2_11"/>
<dbReference type="Proteomes" id="UP000000603">
    <property type="component" value="Chromosome"/>
</dbReference>
<dbReference type="GO" id="GO:0005886">
    <property type="term" value="C:plasma membrane"/>
    <property type="evidence" value="ECO:0007669"/>
    <property type="project" value="UniProtKB-SubCell"/>
</dbReference>
<dbReference type="GO" id="GO:0015079">
    <property type="term" value="F:potassium ion transmembrane transporter activity"/>
    <property type="evidence" value="ECO:0007669"/>
    <property type="project" value="UniProtKB-UniRule"/>
</dbReference>
<dbReference type="GO" id="GO:0015293">
    <property type="term" value="F:symporter activity"/>
    <property type="evidence" value="ECO:0007669"/>
    <property type="project" value="UniProtKB-UniRule"/>
</dbReference>
<dbReference type="HAMAP" id="MF_01522">
    <property type="entry name" value="Kup"/>
    <property type="match status" value="1"/>
</dbReference>
<dbReference type="InterPro" id="IPR003855">
    <property type="entry name" value="K+_transporter"/>
</dbReference>
<dbReference type="InterPro" id="IPR053952">
    <property type="entry name" value="K_trans_C"/>
</dbReference>
<dbReference type="InterPro" id="IPR053951">
    <property type="entry name" value="K_trans_N"/>
</dbReference>
<dbReference type="InterPro" id="IPR023051">
    <property type="entry name" value="Kup"/>
</dbReference>
<dbReference type="PANTHER" id="PTHR30540:SF79">
    <property type="entry name" value="LOW AFFINITY POTASSIUM TRANSPORT SYSTEM PROTEIN KUP"/>
    <property type="match status" value="1"/>
</dbReference>
<dbReference type="PANTHER" id="PTHR30540">
    <property type="entry name" value="OSMOTIC STRESS POTASSIUM TRANSPORTER"/>
    <property type="match status" value="1"/>
</dbReference>
<dbReference type="Pfam" id="PF02705">
    <property type="entry name" value="K_trans"/>
    <property type="match status" value="1"/>
</dbReference>
<dbReference type="Pfam" id="PF22776">
    <property type="entry name" value="K_trans_C"/>
    <property type="match status" value="1"/>
</dbReference>
<evidence type="ECO:0000255" key="1">
    <source>
        <dbReference type="HAMAP-Rule" id="MF_01522"/>
    </source>
</evidence>
<feature type="chain" id="PRO_0000209039" description="Probable potassium transport system protein Kup">
    <location>
        <begin position="1"/>
        <end position="651"/>
    </location>
</feature>
<feature type="transmembrane region" description="Helical" evidence="1">
    <location>
        <begin position="30"/>
        <end position="50"/>
    </location>
</feature>
<feature type="transmembrane region" description="Helical" evidence="1">
    <location>
        <begin position="71"/>
        <end position="91"/>
    </location>
</feature>
<feature type="transmembrane region" description="Helical" evidence="1">
    <location>
        <begin position="124"/>
        <end position="144"/>
    </location>
</feature>
<feature type="transmembrane region" description="Helical" evidence="1">
    <location>
        <begin position="158"/>
        <end position="178"/>
    </location>
</feature>
<feature type="transmembrane region" description="Helical" evidence="1">
    <location>
        <begin position="190"/>
        <end position="210"/>
    </location>
</feature>
<feature type="transmembrane region" description="Helical" evidence="1">
    <location>
        <begin position="233"/>
        <end position="253"/>
    </location>
</feature>
<feature type="transmembrane region" description="Helical" evidence="1">
    <location>
        <begin position="268"/>
        <end position="288"/>
    </location>
</feature>
<feature type="transmembrane region" description="Helical" evidence="1">
    <location>
        <begin position="310"/>
        <end position="330"/>
    </location>
</feature>
<feature type="transmembrane region" description="Helical" evidence="1">
    <location>
        <begin position="358"/>
        <end position="378"/>
    </location>
</feature>
<feature type="transmembrane region" description="Helical" evidence="1">
    <location>
        <begin position="387"/>
        <end position="407"/>
    </location>
</feature>
<feature type="transmembrane region" description="Helical" evidence="1">
    <location>
        <begin position="413"/>
        <end position="433"/>
    </location>
</feature>
<feature type="transmembrane region" description="Helical" evidence="1">
    <location>
        <begin position="437"/>
        <end position="457"/>
    </location>
</feature>
<accession>Q6A5S0</accession>
<gene>
    <name evidence="1" type="primary">kup</name>
    <name type="ordered locus">PPA2187</name>
</gene>
<organism>
    <name type="scientific">Cutibacterium acnes (strain DSM 16379 / KPA171202)</name>
    <name type="common">Propionibacterium acnes</name>
    <dbReference type="NCBI Taxonomy" id="267747"/>
    <lineage>
        <taxon>Bacteria</taxon>
        <taxon>Bacillati</taxon>
        <taxon>Actinomycetota</taxon>
        <taxon>Actinomycetes</taxon>
        <taxon>Propionibacteriales</taxon>
        <taxon>Propionibacteriaceae</taxon>
        <taxon>Cutibacterium</taxon>
    </lineage>
</organism>